<organism>
    <name type="scientific">Mycosarcoma maydis</name>
    <name type="common">Corn smut fungus</name>
    <name type="synonym">Ustilago maydis</name>
    <dbReference type="NCBI Taxonomy" id="5270"/>
    <lineage>
        <taxon>Eukaryota</taxon>
        <taxon>Fungi</taxon>
        <taxon>Dikarya</taxon>
        <taxon>Basidiomycota</taxon>
        <taxon>Ustilaginomycotina</taxon>
        <taxon>Ustilaginomycetes</taxon>
        <taxon>Ustilaginales</taxon>
        <taxon>Ustilaginaceae</taxon>
        <taxon>Mycosarcoma</taxon>
    </lineage>
</organism>
<proteinExistence type="inferred from homology"/>
<evidence type="ECO:0000250" key="1"/>
<evidence type="ECO:0000256" key="2">
    <source>
        <dbReference type="SAM" id="MobiDB-lite"/>
    </source>
</evidence>
<evidence type="ECO:0000305" key="3"/>
<dbReference type="EMBL" id="CM003141">
    <property type="protein sequence ID" value="KIS71425.1"/>
    <property type="molecule type" value="Genomic_DNA"/>
</dbReference>
<dbReference type="RefSeq" id="XP_011387232.1">
    <property type="nucleotide sequence ID" value="XM_011388930.1"/>
</dbReference>
<dbReference type="SMR" id="Q4PEZ0"/>
<dbReference type="FunCoup" id="Q4PEZ0">
    <property type="interactions" value="552"/>
</dbReference>
<dbReference type="STRING" id="237631.Q4PEZ0"/>
<dbReference type="EnsemblFungi" id="KIS71425">
    <property type="protein sequence ID" value="KIS71425"/>
    <property type="gene ID" value="UMAG_01323"/>
</dbReference>
<dbReference type="GeneID" id="23562388"/>
<dbReference type="KEGG" id="uma:UMAG_01323"/>
<dbReference type="VEuPathDB" id="FungiDB:UMAG_01323"/>
<dbReference type="eggNOG" id="KOG3068">
    <property type="taxonomic scope" value="Eukaryota"/>
</dbReference>
<dbReference type="HOGENOM" id="CLU_043453_0_1_1"/>
<dbReference type="InParanoid" id="Q4PEZ0"/>
<dbReference type="OMA" id="EVEWNER"/>
<dbReference type="OrthoDB" id="1739576at2759"/>
<dbReference type="Proteomes" id="UP000000561">
    <property type="component" value="Chromosome 2"/>
</dbReference>
<dbReference type="GO" id="GO:0071013">
    <property type="term" value="C:catalytic step 2 spliceosome"/>
    <property type="evidence" value="ECO:0000318"/>
    <property type="project" value="GO_Central"/>
</dbReference>
<dbReference type="GO" id="GO:0005737">
    <property type="term" value="C:cytoplasm"/>
    <property type="evidence" value="ECO:0007669"/>
    <property type="project" value="UniProtKB-SubCell"/>
</dbReference>
<dbReference type="GO" id="GO:0071014">
    <property type="term" value="C:post-mRNA release spliceosomal complex"/>
    <property type="evidence" value="ECO:0000318"/>
    <property type="project" value="GO_Central"/>
</dbReference>
<dbReference type="GO" id="GO:0071020">
    <property type="term" value="C:post-spliceosomal complex"/>
    <property type="evidence" value="ECO:0000318"/>
    <property type="project" value="GO_Central"/>
</dbReference>
<dbReference type="GO" id="GO:0000974">
    <property type="term" value="C:Prp19 complex"/>
    <property type="evidence" value="ECO:0000318"/>
    <property type="project" value="GO_Central"/>
</dbReference>
<dbReference type="GO" id="GO:0000350">
    <property type="term" value="P:generation of catalytic spliceosome for second transesterification step"/>
    <property type="evidence" value="ECO:0000318"/>
    <property type="project" value="GO_Central"/>
</dbReference>
<dbReference type="GO" id="GO:0000389">
    <property type="term" value="P:mRNA 3'-splice site recognition"/>
    <property type="evidence" value="ECO:0000318"/>
    <property type="project" value="GO_Central"/>
</dbReference>
<dbReference type="FunFam" id="1.10.287.660:FF:000001">
    <property type="entry name" value="pre-mRNA-splicing factor ISY1 homolog"/>
    <property type="match status" value="1"/>
</dbReference>
<dbReference type="Gene3D" id="1.10.287.660">
    <property type="entry name" value="Helix hairpin bin"/>
    <property type="match status" value="1"/>
</dbReference>
<dbReference type="InterPro" id="IPR029012">
    <property type="entry name" value="Helix_hairpin_bin_sf"/>
</dbReference>
<dbReference type="InterPro" id="IPR009360">
    <property type="entry name" value="Isy1"/>
</dbReference>
<dbReference type="InterPro" id="IPR037200">
    <property type="entry name" value="Isy1_sf"/>
</dbReference>
<dbReference type="PANTHER" id="PTHR13021">
    <property type="entry name" value="PRE-MRNA-SPLICING FACTOR ISY1"/>
    <property type="match status" value="1"/>
</dbReference>
<dbReference type="Pfam" id="PF06246">
    <property type="entry name" value="Isy1"/>
    <property type="match status" value="1"/>
</dbReference>
<dbReference type="SUPFAM" id="SSF140102">
    <property type="entry name" value="ISY1 domain-like"/>
    <property type="match status" value="1"/>
</dbReference>
<gene>
    <name type="primary">ISY1</name>
    <name type="ORF">UMAG_01323</name>
</gene>
<name>ISY1_MYCMD</name>
<keyword id="KW-0963">Cytoplasm</keyword>
<keyword id="KW-0507">mRNA processing</keyword>
<keyword id="KW-0508">mRNA splicing</keyword>
<keyword id="KW-0539">Nucleus</keyword>
<keyword id="KW-1185">Reference proteome</keyword>
<keyword id="KW-0747">Spliceosome</keyword>
<protein>
    <recommendedName>
        <fullName>Pre-mRNA-splicing factor ISY1</fullName>
    </recommendedName>
</protein>
<feature type="chain" id="PRO_0000192974" description="Pre-mRNA-splicing factor ISY1">
    <location>
        <begin position="1"/>
        <end position="351"/>
    </location>
</feature>
<feature type="region of interest" description="Disordered" evidence="2">
    <location>
        <begin position="202"/>
        <end position="241"/>
    </location>
</feature>
<feature type="region of interest" description="Disordered" evidence="2">
    <location>
        <begin position="254"/>
        <end position="327"/>
    </location>
</feature>
<feature type="compositionally biased region" description="Basic and acidic residues" evidence="2">
    <location>
        <begin position="202"/>
        <end position="214"/>
    </location>
</feature>
<reference key="1">
    <citation type="journal article" date="2006" name="Nature">
        <title>Insights from the genome of the biotrophic fungal plant pathogen Ustilago maydis.</title>
        <authorList>
            <person name="Kaemper J."/>
            <person name="Kahmann R."/>
            <person name="Boelker M."/>
            <person name="Ma L.-J."/>
            <person name="Brefort T."/>
            <person name="Saville B.J."/>
            <person name="Banuett F."/>
            <person name="Kronstad J.W."/>
            <person name="Gold S.E."/>
            <person name="Mueller O."/>
            <person name="Perlin M.H."/>
            <person name="Woesten H.A.B."/>
            <person name="de Vries R."/>
            <person name="Ruiz-Herrera J."/>
            <person name="Reynaga-Pena C.G."/>
            <person name="Snetselaar K."/>
            <person name="McCann M."/>
            <person name="Perez-Martin J."/>
            <person name="Feldbruegge M."/>
            <person name="Basse C.W."/>
            <person name="Steinberg G."/>
            <person name="Ibeas J.I."/>
            <person name="Holloman W."/>
            <person name="Guzman P."/>
            <person name="Farman M.L."/>
            <person name="Stajich J.E."/>
            <person name="Sentandreu R."/>
            <person name="Gonzalez-Prieto J.M."/>
            <person name="Kennell J.C."/>
            <person name="Molina L."/>
            <person name="Schirawski J."/>
            <person name="Mendoza-Mendoza A."/>
            <person name="Greilinger D."/>
            <person name="Muench K."/>
            <person name="Roessel N."/>
            <person name="Scherer M."/>
            <person name="Vranes M."/>
            <person name="Ladendorf O."/>
            <person name="Vincon V."/>
            <person name="Fuchs U."/>
            <person name="Sandrock B."/>
            <person name="Meng S."/>
            <person name="Ho E.C.H."/>
            <person name="Cahill M.J."/>
            <person name="Boyce K.J."/>
            <person name="Klose J."/>
            <person name="Klosterman S.J."/>
            <person name="Deelstra H.J."/>
            <person name="Ortiz-Castellanos L."/>
            <person name="Li W."/>
            <person name="Sanchez-Alonso P."/>
            <person name="Schreier P.H."/>
            <person name="Haeuser-Hahn I."/>
            <person name="Vaupel M."/>
            <person name="Koopmann E."/>
            <person name="Friedrich G."/>
            <person name="Voss H."/>
            <person name="Schlueter T."/>
            <person name="Margolis J."/>
            <person name="Platt D."/>
            <person name="Swimmer C."/>
            <person name="Gnirke A."/>
            <person name="Chen F."/>
            <person name="Vysotskaia V."/>
            <person name="Mannhaupt G."/>
            <person name="Gueldener U."/>
            <person name="Muensterkoetter M."/>
            <person name="Haase D."/>
            <person name="Oesterheld M."/>
            <person name="Mewes H.-W."/>
            <person name="Mauceli E.W."/>
            <person name="DeCaprio D."/>
            <person name="Wade C.M."/>
            <person name="Butler J."/>
            <person name="Young S.K."/>
            <person name="Jaffe D.B."/>
            <person name="Calvo S.E."/>
            <person name="Nusbaum C."/>
            <person name="Galagan J.E."/>
            <person name="Birren B.W."/>
        </authorList>
    </citation>
    <scope>NUCLEOTIDE SEQUENCE [LARGE SCALE GENOMIC DNA]</scope>
    <source>
        <strain>DSM 14603 / FGSC 9021 / UM521</strain>
    </source>
</reference>
<reference key="2">
    <citation type="submission" date="2014-09" db="EMBL/GenBank/DDBJ databases">
        <authorList>
            <person name="Gueldener U."/>
            <person name="Muensterkoetter M."/>
            <person name="Walter M.C."/>
            <person name="Mannhaupt G."/>
            <person name="Kahmann R."/>
        </authorList>
    </citation>
    <scope>GENOME REANNOTATION</scope>
    <source>
        <strain>DSM 14603 / FGSC 9021 / UM521</strain>
    </source>
</reference>
<sequence length="351" mass="39871">MARNQEKAQSMLYRFREAQATSLGVSTKPARRPRLASSVSSLKECERWRSDVIREISRKVSKIQDFGLNDYEVRDLNDEINKLLREKGHWENQIVALGGANYKRGVPSMLGDDKGVVGRGGYKYFGRAKDLPGVKELFTSQKADEAGRSEERYERFRNLPPSYYGDEDEDDGLLLEQERSAEEVEWNERFWNVVQGLKHDLQSRDDHDNMHLTDAEDDEHGGIQVPKIPRPSPRPLKQSVQAVQASLSAAYNQRFMEHAATPAESTSKRAPQDELQTPAKRHKNEQGHPIPPTHHADAEPSRTTLEPPSVADYSIFSPEDLQPPPIPDRAAIEKLILQAKKKQLRQEYIGA</sequence>
<accession>Q4PEZ0</accession>
<accession>A0A0D1EAL2</accession>
<comment type="function">
    <text evidence="1">Involved in pre-mRNA splicing.</text>
</comment>
<comment type="subunit">
    <text evidence="1">Associated with the spliceosome.</text>
</comment>
<comment type="subcellular location">
    <subcellularLocation>
        <location evidence="1">Cytoplasm</location>
    </subcellularLocation>
    <subcellularLocation>
        <location evidence="1">Nucleus</location>
    </subcellularLocation>
</comment>
<comment type="similarity">
    <text evidence="3">Belongs to the ISY1 family.</text>
</comment>